<feature type="chain" id="PRO_0000209729" description="Synaptojanin-1">
    <location>
        <begin position="1"/>
        <end position="1324" status="greater than"/>
    </location>
</feature>
<feature type="domain" description="SAC" evidence="5">
    <location>
        <begin position="119"/>
        <end position="442"/>
    </location>
</feature>
<feature type="domain" description="RRM" evidence="4">
    <location>
        <begin position="902"/>
        <end position="971"/>
    </location>
</feature>
<feature type="region of interest" description="Catalytic">
    <location>
        <begin position="475"/>
        <end position="859"/>
    </location>
</feature>
<feature type="region of interest" description="Disordered" evidence="6">
    <location>
        <begin position="1030"/>
        <end position="1324"/>
    </location>
</feature>
<feature type="compositionally biased region" description="Polar residues" evidence="6">
    <location>
        <begin position="1080"/>
        <end position="1103"/>
    </location>
</feature>
<feature type="compositionally biased region" description="Pro residues" evidence="6">
    <location>
        <begin position="1108"/>
        <end position="1130"/>
    </location>
</feature>
<feature type="compositionally biased region" description="Basic and acidic residues" evidence="6">
    <location>
        <begin position="1138"/>
        <end position="1156"/>
    </location>
</feature>
<feature type="compositionally biased region" description="Low complexity" evidence="6">
    <location>
        <begin position="1278"/>
        <end position="1292"/>
    </location>
</feature>
<feature type="modified residue" description="Phosphoserine" evidence="3">
    <location>
        <position position="820"/>
    </location>
</feature>
<feature type="modified residue" description="Phosphoserine" evidence="1">
    <location>
        <position position="830"/>
    </location>
</feature>
<feature type="modified residue" description="Omega-N-methylarginine" evidence="3">
    <location>
        <position position="1186"/>
    </location>
</feature>
<feature type="modified residue" description="Phosphothreonine" evidence="1">
    <location>
        <position position="1205"/>
    </location>
</feature>
<feature type="modified residue" description="Phosphoserine" evidence="1">
    <location>
        <position position="1277"/>
    </location>
</feature>
<feature type="sequence conflict" description="In Ref. 1; AA sequence." evidence="8" ref="1">
    <original>Y</original>
    <variation>YY</variation>
    <location>
        <position position="335"/>
    </location>
</feature>
<feature type="non-terminal residue">
    <location>
        <position position="1324"/>
    </location>
</feature>
<reference key="1">
    <citation type="journal article" date="1997" name="Mol. Cell. Biol.">
        <title>Phosphatidylinositol 4,5-bisphosphate phosphatase regulates the rearrangement of actin filaments.</title>
        <authorList>
            <person name="Sakisaka T."/>
            <person name="Itoh T."/>
            <person name="Miura K."/>
            <person name="Takenawa T."/>
        </authorList>
    </citation>
    <scope>NUCLEOTIDE SEQUENCE [MRNA]</scope>
    <scope>PROTEIN SEQUENCE OF 321-339 AND 454-469</scope>
    <scope>FUNCTION</scope>
    <scope>SUBCELLULAR LOCATION</scope>
    <scope>INTERACTION WITH ASH/GRB2</scope>
    <scope>DOMAIN</scope>
    <scope>TISSUE SPECIFICITY</scope>
    <scope>CATALYTIC ACTIVITY</scope>
    <source>
        <tissue>Brain</tissue>
    </source>
</reference>
<evidence type="ECO:0000250" key="1">
    <source>
        <dbReference type="UniProtKB" id="O43426"/>
    </source>
</evidence>
<evidence type="ECO:0000250" key="2">
    <source>
        <dbReference type="UniProtKB" id="Q62910"/>
    </source>
</evidence>
<evidence type="ECO:0000250" key="3">
    <source>
        <dbReference type="UniProtKB" id="Q8CHC4"/>
    </source>
</evidence>
<evidence type="ECO:0000255" key="4">
    <source>
        <dbReference type="PROSITE-ProRule" id="PRU00176"/>
    </source>
</evidence>
<evidence type="ECO:0000255" key="5">
    <source>
        <dbReference type="PROSITE-ProRule" id="PRU00183"/>
    </source>
</evidence>
<evidence type="ECO:0000256" key="6">
    <source>
        <dbReference type="SAM" id="MobiDB-lite"/>
    </source>
</evidence>
<evidence type="ECO:0000269" key="7">
    <source>
    </source>
</evidence>
<evidence type="ECO:0000305" key="8"/>
<keyword id="KW-0963">Cytoplasm</keyword>
<keyword id="KW-0903">Direct protein sequencing</keyword>
<keyword id="KW-0254">Endocytosis</keyword>
<keyword id="KW-0378">Hydrolase</keyword>
<keyword id="KW-0443">Lipid metabolism</keyword>
<keyword id="KW-0488">Methylation</keyword>
<keyword id="KW-0597">Phosphoprotein</keyword>
<keyword id="KW-1185">Reference proteome</keyword>
<keyword id="KW-0694">RNA-binding</keyword>
<dbReference type="EC" id="3.1.3.36" evidence="7"/>
<dbReference type="EMBL" id="D85682">
    <property type="protein sequence ID" value="BAA21652.1"/>
    <property type="status" value="ALT_FRAME"/>
    <property type="molecule type" value="mRNA"/>
</dbReference>
<dbReference type="FunCoup" id="O18964">
    <property type="interactions" value="280"/>
</dbReference>
<dbReference type="STRING" id="9913.ENSBTAP00000072073"/>
<dbReference type="PaxDb" id="9913-ENSBTAP00000003985"/>
<dbReference type="eggNOG" id="KOG0566">
    <property type="taxonomic scope" value="Eukaryota"/>
</dbReference>
<dbReference type="InParanoid" id="O18964"/>
<dbReference type="OrthoDB" id="1925875at2759"/>
<dbReference type="Proteomes" id="UP000009136">
    <property type="component" value="Unplaced"/>
</dbReference>
<dbReference type="GO" id="GO:0005737">
    <property type="term" value="C:cytoplasm"/>
    <property type="evidence" value="ECO:0000318"/>
    <property type="project" value="GO_Central"/>
</dbReference>
<dbReference type="GO" id="GO:0016020">
    <property type="term" value="C:membrane"/>
    <property type="evidence" value="ECO:0000318"/>
    <property type="project" value="GO_Central"/>
</dbReference>
<dbReference type="GO" id="GO:0048471">
    <property type="term" value="C:perinuclear region of cytoplasm"/>
    <property type="evidence" value="ECO:0000314"/>
    <property type="project" value="UniProtKB"/>
</dbReference>
<dbReference type="GO" id="GO:0098793">
    <property type="term" value="C:presynapse"/>
    <property type="evidence" value="ECO:0000318"/>
    <property type="project" value="GO_Central"/>
</dbReference>
<dbReference type="GO" id="GO:0052658">
    <property type="term" value="F:inositol-1,4,5-trisphosphate 5-phosphatase activity"/>
    <property type="evidence" value="ECO:0000318"/>
    <property type="project" value="GO_Central"/>
</dbReference>
<dbReference type="GO" id="GO:0004439">
    <property type="term" value="F:phosphatidylinositol-4,5-bisphosphate 5-phosphatase activity"/>
    <property type="evidence" value="ECO:0000314"/>
    <property type="project" value="UniProtKB"/>
</dbReference>
<dbReference type="GO" id="GO:0003723">
    <property type="term" value="F:RNA binding"/>
    <property type="evidence" value="ECO:0007669"/>
    <property type="project" value="UniProtKB-KW"/>
</dbReference>
<dbReference type="GO" id="GO:0046856">
    <property type="term" value="P:phosphatidylinositol dephosphorylation"/>
    <property type="evidence" value="ECO:0007669"/>
    <property type="project" value="InterPro"/>
</dbReference>
<dbReference type="GO" id="GO:0048488">
    <property type="term" value="P:synaptic vesicle endocytosis"/>
    <property type="evidence" value="ECO:0000318"/>
    <property type="project" value="GO_Central"/>
</dbReference>
<dbReference type="CDD" id="cd09098">
    <property type="entry name" value="INPP5c_Synj1"/>
    <property type="match status" value="1"/>
</dbReference>
<dbReference type="CDD" id="cd12719">
    <property type="entry name" value="RRM_SYNJ1"/>
    <property type="match status" value="1"/>
</dbReference>
<dbReference type="FunFam" id="3.30.70.330:FF:000076">
    <property type="entry name" value="Synaptojanin-1 isoform 1"/>
    <property type="match status" value="1"/>
</dbReference>
<dbReference type="FunFam" id="3.60.10.10:FF:000003">
    <property type="entry name" value="Synaptojanin-1 isoform 1"/>
    <property type="match status" value="1"/>
</dbReference>
<dbReference type="Gene3D" id="3.30.70.330">
    <property type="match status" value="1"/>
</dbReference>
<dbReference type="Gene3D" id="3.60.10.10">
    <property type="entry name" value="Endonuclease/exonuclease/phosphatase"/>
    <property type="match status" value="1"/>
</dbReference>
<dbReference type="InterPro" id="IPR036691">
    <property type="entry name" value="Endo/exonu/phosph_ase_sf"/>
</dbReference>
<dbReference type="InterPro" id="IPR046985">
    <property type="entry name" value="IP5"/>
</dbReference>
<dbReference type="InterPro" id="IPR000300">
    <property type="entry name" value="IPPc"/>
</dbReference>
<dbReference type="InterPro" id="IPR012677">
    <property type="entry name" value="Nucleotide-bd_a/b_plait_sf"/>
</dbReference>
<dbReference type="InterPro" id="IPR035979">
    <property type="entry name" value="RBD_domain_sf"/>
</dbReference>
<dbReference type="InterPro" id="IPR000504">
    <property type="entry name" value="RRM_dom"/>
</dbReference>
<dbReference type="InterPro" id="IPR002013">
    <property type="entry name" value="SAC_dom"/>
</dbReference>
<dbReference type="InterPro" id="IPR015047">
    <property type="entry name" value="SYNJ1/2_RRM"/>
</dbReference>
<dbReference type="InterPro" id="IPR034971">
    <property type="entry name" value="SYNJ1_RRM"/>
</dbReference>
<dbReference type="PANTHER" id="PTHR11200">
    <property type="entry name" value="INOSITOL 5-PHOSPHATASE"/>
    <property type="match status" value="1"/>
</dbReference>
<dbReference type="PANTHER" id="PTHR11200:SF158">
    <property type="entry name" value="SYNAPTOJANIN-1"/>
    <property type="match status" value="1"/>
</dbReference>
<dbReference type="Pfam" id="PF08952">
    <property type="entry name" value="DUF1866"/>
    <property type="match status" value="1"/>
</dbReference>
<dbReference type="Pfam" id="PF22669">
    <property type="entry name" value="Exo_endo_phos2"/>
    <property type="match status" value="1"/>
</dbReference>
<dbReference type="Pfam" id="PF02383">
    <property type="entry name" value="Syja_N"/>
    <property type="match status" value="1"/>
</dbReference>
<dbReference type="SMART" id="SM01165">
    <property type="entry name" value="DUF1866"/>
    <property type="match status" value="1"/>
</dbReference>
<dbReference type="SMART" id="SM00128">
    <property type="entry name" value="IPPc"/>
    <property type="match status" value="1"/>
</dbReference>
<dbReference type="SUPFAM" id="SSF56219">
    <property type="entry name" value="DNase I-like"/>
    <property type="match status" value="1"/>
</dbReference>
<dbReference type="SUPFAM" id="SSF54928">
    <property type="entry name" value="RNA-binding domain, RBD"/>
    <property type="match status" value="1"/>
</dbReference>
<dbReference type="PROSITE" id="PS50102">
    <property type="entry name" value="RRM"/>
    <property type="match status" value="1"/>
</dbReference>
<dbReference type="PROSITE" id="PS50275">
    <property type="entry name" value="SAC"/>
    <property type="match status" value="1"/>
</dbReference>
<comment type="function">
    <text evidence="2 7">Phosphatase that acts on various phosphoinositides, including phosphatidylinositol 4-phosphate, phosphatidylinositol (4,5)-bisphosphate and phosphatidylinositol (3,4,5)-trisphosphate (PubMed:9199318). Has a role in clathrin-mediated endocytosis (By similarity). Hydrolyzes PIP2 bound to actin regulatory proteins resulting in the rearrangement of actin filaments downstream of tyrosine kinase and ASH/GRB2 (PubMed:9199318).</text>
</comment>
<comment type="catalytic activity">
    <reaction evidence="7">
        <text>a 1,2-diacyl-sn-glycero-3-phospho-(1D-myo-inositol-4,5-bisphosphate) + H2O = a 1,2-diacyl-sn-glycero-3-phospho-(1D-myo-inositol 4-phosphate) + phosphate</text>
        <dbReference type="Rhea" id="RHEA:22764"/>
        <dbReference type="ChEBI" id="CHEBI:15377"/>
        <dbReference type="ChEBI" id="CHEBI:43474"/>
        <dbReference type="ChEBI" id="CHEBI:58178"/>
        <dbReference type="ChEBI" id="CHEBI:58456"/>
        <dbReference type="EC" id="3.1.3.36"/>
    </reaction>
</comment>
<comment type="subunit">
    <text evidence="2 3 7">Interacts with ASH/GRB2 (PubMed:9199318). Interacts with PACSIN1, PACSIN2 and PACSIN3. Interacts with AMPH, SH3GL1, SH3GL2 and SH3GL3. Interacts with MYO1E (via SH3 domain). Interacts with BIN1 and DNM1. Interacts with EPS15 (By similarity).</text>
</comment>
<comment type="subcellular location">
    <subcellularLocation>
        <location evidence="7">Cytoplasm</location>
        <location evidence="7">Perinuclear region</location>
    </subcellularLocation>
</comment>
<comment type="tissue specificity">
    <text evidence="7">Ubiquitously expressed with highest levels in brain.</text>
</comment>
<comment type="domain">
    <text evidence="2">Interacts with EPS15 (a clathrin coat-associated protein) via a C-terminal domain containing three Asn-Pro-Phe (NPF) repeats.</text>
</comment>
<comment type="domain">
    <text evidence="7">The C-terminal proline-rich region mediates binding to a variety of SH3 domain-containing proteins including ASH/GRB2.</text>
</comment>
<comment type="similarity">
    <text evidence="8">Belongs to the synaptojanin family.</text>
</comment>
<comment type="similarity">
    <text evidence="8">In the central section; belongs to the inositol 1,4,5-trisphosphate 5-phosphatase family.</text>
</comment>
<comment type="sequence caution" evidence="8">
    <conflict type="frameshift">
        <sequence resource="EMBL-CDS" id="BAA21652"/>
    </conflict>
</comment>
<name>SYNJ1_BOVIN</name>
<organism>
    <name type="scientific">Bos taurus</name>
    <name type="common">Bovine</name>
    <dbReference type="NCBI Taxonomy" id="9913"/>
    <lineage>
        <taxon>Eukaryota</taxon>
        <taxon>Metazoa</taxon>
        <taxon>Chordata</taxon>
        <taxon>Craniata</taxon>
        <taxon>Vertebrata</taxon>
        <taxon>Euteleostomi</taxon>
        <taxon>Mammalia</taxon>
        <taxon>Eutheria</taxon>
        <taxon>Laurasiatheria</taxon>
        <taxon>Artiodactyla</taxon>
        <taxon>Ruminantia</taxon>
        <taxon>Pecora</taxon>
        <taxon>Bovidae</taxon>
        <taxon>Bovinae</taxon>
        <taxon>Bos</taxon>
    </lineage>
</organism>
<protein>
    <recommendedName>
        <fullName>Synaptojanin-1</fullName>
        <ecNumber evidence="7">3.1.3.36</ecNumber>
    </recommendedName>
    <alternativeName>
        <fullName>Synaptic inositol 1,4,5-trisphosphate 5-phosphatase 1</fullName>
    </alternativeName>
    <alternativeName>
        <fullName>p150</fullName>
    </alternativeName>
</protein>
<sequence>MAFSKGFRIYHKLDPPPFSLIVETRHKEECLMFESGAVAVLSSAEKEAIKGTYSKVLDAYGLLGVLRLNLGDIMLHYLVLVTGCMSVGKIQESEVFRVTSTEFISLRVDSSDEDRISEVRKVLNSGNFYFAWSASGVSLDLSLNAHRSLQEHTTDNRFSWNQSLHLHLKHYGVNCADWLLRLMCGGVEIRTIYAAHKQAKACLISRLSCERAGTRFNVRGTNDDGHVANFVETEQVVYLDDSVSSFIQIRGSVPLFWEQPGLQVGSHRVRMSRGFEANAPAFDRHFRTLKNLYGKQIIVNLLGSKEGEHMLSKAFQSHLKASEHAADIQMVNFDYHQMVKGGKAEKLHSVLKPQVQKFLDYGIFHFDGSEVQRCQSGTVRTNCLDCLDRTNSVQAFLGLEMLTKQLEALGLAEKPQLVTRFQEVFRSMWSVNGDSISKIYAGTGALEGKAKLKDGARSVSRTIQNNFFDSSKQEAIDVLLLGNTLNSDLADKARALLTTGSLRVSEQTLQSASSKVLKSMCENFYKYSKPKKIRVCVGTWNVNGGKQFRSIAFKNQTLTDWLLDAPKLAGIQEFQDKRSKPMDIFPIGFEEMVELNAGNIVNASTTNQKLWAAELQKTISRDNKYVLLASEQLVGVCLFVFIRPQHAPFIRDVAVDTVKTGMGGATGNKGAVAIRMLFHTTSLCFVCSHFAAGQSQVKERNDDFLEIARKLSFPMGRLLFSHDYVFWCGDFNYRIDLPNEEVKELIRQQNWDSLIAGDQLINQKNAGQIFRGFLEGKVTFAPTYKYDLFSDDYDTSEKCRTPAWTDRVLWRRRKWPFDRSAEDLDLLNASFQDESKILYTWTPGTLLHYGRAELKTSDHRPVVALIDIDIFEVEAEERQNIYKEVIAVQGPPDGTVLVSIKSSLPENNFFNDALIDELLQQFTNFGEVILIRFVEDKMWVTFLEGSSALNVLNLNGKELLGRTITITLKSPDWIKTLEEEMSLEKINVPLPSSTSSTLLGEDAEVTADFDMEGDVDDYSAEVEEILPQHLQPSSSSALARPPVLHPGPVPASHLPYRRGPVPSLPVRPSRAPSRTPGPPASQSSPVDTLPATQLQQKDSSQTLEPKRPPPPRPVAPPARPAPPQRPPPPSGARSPAPARERVWSTRKAQERPRRDNLGGSQLPPQGGLPGPGLAGHSAARPIIPPRAGVISAPESHGRVSAGRLTPESQRKTXEVLKGPALLPEPLKPQAALPVPPSLAPPSQEMQEPLIAVAAPLAQSALQPSLETPPQPPPRSRSSHSLPSDAPAAAAGATIRVTGEKQTGVSAVRLDCPLKSDPFEDLSLN</sequence>
<accession>O18964</accession>
<gene>
    <name type="primary">SYNJ1</name>
</gene>
<proteinExistence type="evidence at protein level"/>